<organism>
    <name type="scientific">Clostridioides difficile (strain 630)</name>
    <name type="common">Peptoclostridium difficile</name>
    <dbReference type="NCBI Taxonomy" id="272563"/>
    <lineage>
        <taxon>Bacteria</taxon>
        <taxon>Bacillati</taxon>
        <taxon>Bacillota</taxon>
        <taxon>Clostridia</taxon>
        <taxon>Peptostreptococcales</taxon>
        <taxon>Peptostreptococcaceae</taxon>
        <taxon>Clostridioides</taxon>
    </lineage>
</organism>
<protein>
    <recommendedName>
        <fullName evidence="1">Transcriptional repressor NrdR</fullName>
    </recommendedName>
</protein>
<sequence length="153" mass="18304">MQCPYCNYKESKVIDSRHTDLKSIRRRRECESCKKRFTTYEKIETTPLMVIKKDNSREYFDREKIKYGLLKACEKRPVSIDEIESIVVHIENEINKCFIEEIETKKIGEMVMDKLKELDEVAYVRFASVYRQFKDINTFVNELKSILIEKGDK</sequence>
<comment type="function">
    <text evidence="1">Negatively regulates transcription of bacterial ribonucleotide reductase nrd genes and operons by binding to NrdR-boxes.</text>
</comment>
<comment type="cofactor">
    <cofactor evidence="1">
        <name>Zn(2+)</name>
        <dbReference type="ChEBI" id="CHEBI:29105"/>
    </cofactor>
    <text evidence="1">Binds 1 zinc ion.</text>
</comment>
<comment type="similarity">
    <text evidence="1">Belongs to the NrdR family.</text>
</comment>
<reference key="1">
    <citation type="journal article" date="2006" name="Nat. Genet.">
        <title>The multidrug-resistant human pathogen Clostridium difficile has a highly mobile, mosaic genome.</title>
        <authorList>
            <person name="Sebaihia M."/>
            <person name="Wren B.W."/>
            <person name="Mullany P."/>
            <person name="Fairweather N.F."/>
            <person name="Minton N."/>
            <person name="Stabler R."/>
            <person name="Thomson N.R."/>
            <person name="Roberts A.P."/>
            <person name="Cerdeno-Tarraga A.M."/>
            <person name="Wang H."/>
            <person name="Holden M.T.G."/>
            <person name="Wright A."/>
            <person name="Churcher C."/>
            <person name="Quail M.A."/>
            <person name="Baker S."/>
            <person name="Bason N."/>
            <person name="Brooks K."/>
            <person name="Chillingworth T."/>
            <person name="Cronin A."/>
            <person name="Davis P."/>
            <person name="Dowd L."/>
            <person name="Fraser A."/>
            <person name="Feltwell T."/>
            <person name="Hance Z."/>
            <person name="Holroyd S."/>
            <person name="Jagels K."/>
            <person name="Moule S."/>
            <person name="Mungall K."/>
            <person name="Price C."/>
            <person name="Rabbinowitsch E."/>
            <person name="Sharp S."/>
            <person name="Simmonds M."/>
            <person name="Stevens K."/>
            <person name="Unwin L."/>
            <person name="Whithead S."/>
            <person name="Dupuy B."/>
            <person name="Dougan G."/>
            <person name="Barrell B."/>
            <person name="Parkhill J."/>
        </authorList>
    </citation>
    <scope>NUCLEOTIDE SEQUENCE [LARGE SCALE GENOMIC DNA]</scope>
    <source>
        <strain>630</strain>
    </source>
</reference>
<evidence type="ECO:0000255" key="1">
    <source>
        <dbReference type="HAMAP-Rule" id="MF_00440"/>
    </source>
</evidence>
<keyword id="KW-0067">ATP-binding</keyword>
<keyword id="KW-0238">DNA-binding</keyword>
<keyword id="KW-0479">Metal-binding</keyword>
<keyword id="KW-0547">Nucleotide-binding</keyword>
<keyword id="KW-1185">Reference proteome</keyword>
<keyword id="KW-0678">Repressor</keyword>
<keyword id="KW-0804">Transcription</keyword>
<keyword id="KW-0805">Transcription regulation</keyword>
<keyword id="KW-0862">Zinc</keyword>
<keyword id="KW-0863">Zinc-finger</keyword>
<proteinExistence type="inferred from homology"/>
<name>NRDR_CLOD6</name>
<accession>Q182X3</accession>
<gene>
    <name evidence="1" type="primary">nrdR</name>
    <name type="ordered locus">CD630_26400</name>
</gene>
<feature type="chain" id="PRO_0000264168" description="Transcriptional repressor NrdR">
    <location>
        <begin position="1"/>
        <end position="153"/>
    </location>
</feature>
<feature type="domain" description="ATP-cone" evidence="1">
    <location>
        <begin position="48"/>
        <end position="138"/>
    </location>
</feature>
<feature type="zinc finger region" evidence="1">
    <location>
        <begin position="3"/>
        <end position="33"/>
    </location>
</feature>
<dbReference type="EMBL" id="AM180355">
    <property type="protein sequence ID" value="CAJ69526.1"/>
    <property type="molecule type" value="Genomic_DNA"/>
</dbReference>
<dbReference type="RefSeq" id="WP_004454958.1">
    <property type="nucleotide sequence ID" value="NZ_JAUPES010000012.1"/>
</dbReference>
<dbReference type="RefSeq" id="YP_001089151.1">
    <property type="nucleotide sequence ID" value="NC_009089.1"/>
</dbReference>
<dbReference type="SMR" id="Q182X3"/>
<dbReference type="STRING" id="272563.CD630_26400"/>
<dbReference type="EnsemblBacteria" id="CAJ69526">
    <property type="protein sequence ID" value="CAJ69526"/>
    <property type="gene ID" value="CD630_26400"/>
</dbReference>
<dbReference type="GeneID" id="66355042"/>
<dbReference type="KEGG" id="cdf:CD630_26400"/>
<dbReference type="KEGG" id="pdc:CDIF630_02894"/>
<dbReference type="PATRIC" id="fig|272563.120.peg.2783"/>
<dbReference type="eggNOG" id="COG1327">
    <property type="taxonomic scope" value="Bacteria"/>
</dbReference>
<dbReference type="OrthoDB" id="9807461at2"/>
<dbReference type="PhylomeDB" id="Q182X3"/>
<dbReference type="BioCyc" id="PDIF272563:G12WB-2791-MONOMER"/>
<dbReference type="Proteomes" id="UP000001978">
    <property type="component" value="Chromosome"/>
</dbReference>
<dbReference type="GO" id="GO:0005524">
    <property type="term" value="F:ATP binding"/>
    <property type="evidence" value="ECO:0007669"/>
    <property type="project" value="UniProtKB-KW"/>
</dbReference>
<dbReference type="GO" id="GO:0003677">
    <property type="term" value="F:DNA binding"/>
    <property type="evidence" value="ECO:0007669"/>
    <property type="project" value="UniProtKB-KW"/>
</dbReference>
<dbReference type="GO" id="GO:0008270">
    <property type="term" value="F:zinc ion binding"/>
    <property type="evidence" value="ECO:0007669"/>
    <property type="project" value="UniProtKB-KW"/>
</dbReference>
<dbReference type="GO" id="GO:0045892">
    <property type="term" value="P:negative regulation of DNA-templated transcription"/>
    <property type="evidence" value="ECO:0007669"/>
    <property type="project" value="UniProtKB-UniRule"/>
</dbReference>
<dbReference type="HAMAP" id="MF_00440">
    <property type="entry name" value="NrdR"/>
    <property type="match status" value="1"/>
</dbReference>
<dbReference type="InterPro" id="IPR005144">
    <property type="entry name" value="ATP-cone_dom"/>
</dbReference>
<dbReference type="InterPro" id="IPR055173">
    <property type="entry name" value="NrdR-like_N"/>
</dbReference>
<dbReference type="InterPro" id="IPR003796">
    <property type="entry name" value="RNR_NrdR-like"/>
</dbReference>
<dbReference type="NCBIfam" id="TIGR00244">
    <property type="entry name" value="transcriptional regulator NrdR"/>
    <property type="match status" value="1"/>
</dbReference>
<dbReference type="PANTHER" id="PTHR30455">
    <property type="entry name" value="TRANSCRIPTIONAL REPRESSOR NRDR"/>
    <property type="match status" value="1"/>
</dbReference>
<dbReference type="PANTHER" id="PTHR30455:SF2">
    <property type="entry name" value="TRANSCRIPTIONAL REPRESSOR NRDR"/>
    <property type="match status" value="1"/>
</dbReference>
<dbReference type="Pfam" id="PF03477">
    <property type="entry name" value="ATP-cone"/>
    <property type="match status" value="1"/>
</dbReference>
<dbReference type="Pfam" id="PF22811">
    <property type="entry name" value="Zn_ribbon_NrdR"/>
    <property type="match status" value="1"/>
</dbReference>
<dbReference type="PROSITE" id="PS51161">
    <property type="entry name" value="ATP_CONE"/>
    <property type="match status" value="1"/>
</dbReference>